<reference key="1">
    <citation type="journal article" date="1988" name="Mol. Gen. Genet.">
        <title>Organization and characterization of the virCD genes from Agrobacterium rhizogenes.</title>
        <authorList>
            <person name="Hirayama T."/>
            <person name="Muranaka T."/>
            <person name="Ohkawa H."/>
            <person name="Oka A."/>
        </authorList>
    </citation>
    <scope>NUCLEOTIDE SEQUENCE [GENOMIC DNA]</scope>
    <source>
        <strain>A4</strain>
    </source>
</reference>
<gene>
    <name type="primary">virD2</name>
</gene>
<evidence type="ECO:0000256" key="1">
    <source>
        <dbReference type="SAM" id="MobiDB-lite"/>
    </source>
</evidence>
<proteinExistence type="predicted"/>
<keyword id="KW-0192">Crown gall tumor</keyword>
<keyword id="KW-0255">Endonuclease</keyword>
<keyword id="KW-0378">Hydrolase</keyword>
<keyword id="KW-0540">Nuclease</keyword>
<keyword id="KW-0614">Plasmid</keyword>
<sequence>MPDRAQVIIRIVPGGGTKTLQQIINQLEYLSRKGKLELQRSARHLDIPLPPDQIHELARSWVQETGTYDESQPDEERQQELTTHIIVSFPAGTSQAAAYAASREWAAEMFGSGAGGGSYNYLTAFHIDRDHPHLHVVVNRRELLGHGWLKISRRHPQLNYDALRINMAEISLRHGIVLDASSRAERGIFERPITYAQFRRLERQARQIRFEDADLEQSSSQGDHPEFSQSPDTAPFEASAGRSEGMPYPNNRQNGSQVHLHEPAGFSNRAGGSVRIALETQRLAIFADDIESGSPPVSDVRAGNANADSDLPRSTVARTTDYSQRWSKRPRDDDEGPSGAKRVRLEGMAVGPEANAGERDSRGDPVAPPAETSRPSSLQDMARPNTATDPLAASGHLEQRRGTLSKRPRVEDDGEPSERKRARDDRSQDGRGGNRR</sequence>
<accession>P13462</accession>
<organism>
    <name type="scientific">Rhizobium rhizogenes</name>
    <name type="common">Agrobacterium rhizogenes</name>
    <dbReference type="NCBI Taxonomy" id="359"/>
    <lineage>
        <taxon>Bacteria</taxon>
        <taxon>Pseudomonadati</taxon>
        <taxon>Pseudomonadota</taxon>
        <taxon>Alphaproteobacteria</taxon>
        <taxon>Hyphomicrobiales</taxon>
        <taxon>Rhizobiaceae</taxon>
        <taxon>Rhizobium/Agrobacterium group</taxon>
        <taxon>Rhizobium</taxon>
    </lineage>
</organism>
<feature type="chain" id="PRO_0000065858" description="T-DNA border endonuclease VirD2">
    <location>
        <begin position="1"/>
        <end position="436"/>
    </location>
</feature>
<feature type="region of interest" description="Disordered" evidence="1">
    <location>
        <begin position="213"/>
        <end position="266"/>
    </location>
</feature>
<feature type="region of interest" description="Disordered" evidence="1">
    <location>
        <begin position="290"/>
        <end position="436"/>
    </location>
</feature>
<feature type="compositionally biased region" description="Polar residues" evidence="1">
    <location>
        <begin position="216"/>
        <end position="232"/>
    </location>
</feature>
<feature type="compositionally biased region" description="Polar residues" evidence="1">
    <location>
        <begin position="316"/>
        <end position="325"/>
    </location>
</feature>
<feature type="compositionally biased region" description="Basic and acidic residues" evidence="1">
    <location>
        <begin position="408"/>
        <end position="429"/>
    </location>
</feature>
<dbReference type="EC" id="3.1.-.-"/>
<dbReference type="EMBL" id="X12867">
    <property type="protein sequence ID" value="CAA31351.1"/>
    <property type="molecule type" value="Genomic_DNA"/>
</dbReference>
<dbReference type="PIR" id="S06884">
    <property type="entry name" value="S06884"/>
</dbReference>
<dbReference type="RefSeq" id="WP_032488282.1">
    <property type="nucleotide sequence ID" value="NZ_VCBD01000008.1"/>
</dbReference>
<dbReference type="eggNOG" id="COG3843">
    <property type="taxonomic scope" value="Bacteria"/>
</dbReference>
<dbReference type="GO" id="GO:0004520">
    <property type="term" value="F:DNA endonuclease activity"/>
    <property type="evidence" value="ECO:0007669"/>
    <property type="project" value="InterPro"/>
</dbReference>
<dbReference type="GO" id="GO:0051819">
    <property type="term" value="P:symbiont-mediated induction of tumor or growth in host"/>
    <property type="evidence" value="ECO:0007669"/>
    <property type="project" value="InterPro"/>
</dbReference>
<dbReference type="InterPro" id="IPR005094">
    <property type="entry name" value="Endonuclease_MobA/VirD2"/>
</dbReference>
<dbReference type="InterPro" id="IPR016644">
    <property type="entry name" value="VirD2"/>
</dbReference>
<dbReference type="NCBIfam" id="NF010437">
    <property type="entry name" value="PRK13863.1"/>
    <property type="match status" value="1"/>
</dbReference>
<dbReference type="Pfam" id="PF03432">
    <property type="entry name" value="Relaxase"/>
    <property type="match status" value="1"/>
</dbReference>
<dbReference type="PIRSF" id="PIRSF016095">
    <property type="entry name" value="Endonuclease_VirD2"/>
    <property type="match status" value="1"/>
</dbReference>
<comment type="function">
    <text>Tumor formation by A.tumefaciens involves the transfer and integration of a defined segment (T-DNA) of Ti plasmid DNA into the plant nuclear genome. The virD operon encodes a site-specific endonuclease that cleaves at a unique site within both 24 bp direct repeats flanking the T-DNA.</text>
</comment>
<protein>
    <recommendedName>
        <fullName>T-DNA border endonuclease VirD2</fullName>
        <ecNumber>3.1.-.-</ecNumber>
    </recommendedName>
</protein>
<geneLocation type="plasmid">
    <name>pRiA4b</name>
</geneLocation>
<name>VIRD2_RHIRH</name>